<name>TIG_BURCM</name>
<proteinExistence type="inferred from homology"/>
<feature type="chain" id="PRO_1000022652" description="Trigger factor">
    <location>
        <begin position="1"/>
        <end position="448"/>
    </location>
</feature>
<feature type="domain" description="PPIase FKBP-type" evidence="1">
    <location>
        <begin position="172"/>
        <end position="257"/>
    </location>
</feature>
<evidence type="ECO:0000255" key="1">
    <source>
        <dbReference type="HAMAP-Rule" id="MF_00303"/>
    </source>
</evidence>
<gene>
    <name evidence="1" type="primary">tig</name>
    <name type="ordered locus">Bamb_1912</name>
</gene>
<dbReference type="EC" id="5.2.1.8" evidence="1"/>
<dbReference type="EMBL" id="CP000440">
    <property type="protein sequence ID" value="ABI87468.1"/>
    <property type="molecule type" value="Genomic_DNA"/>
</dbReference>
<dbReference type="RefSeq" id="WP_011657162.1">
    <property type="nucleotide sequence ID" value="NZ_CP009798.1"/>
</dbReference>
<dbReference type="SMR" id="Q0BEF5"/>
<dbReference type="GeneID" id="93085885"/>
<dbReference type="KEGG" id="bam:Bamb_1912"/>
<dbReference type="PATRIC" id="fig|339670.21.peg.3039"/>
<dbReference type="eggNOG" id="COG0544">
    <property type="taxonomic scope" value="Bacteria"/>
</dbReference>
<dbReference type="Proteomes" id="UP000000662">
    <property type="component" value="Chromosome 1"/>
</dbReference>
<dbReference type="GO" id="GO:0005737">
    <property type="term" value="C:cytoplasm"/>
    <property type="evidence" value="ECO:0007669"/>
    <property type="project" value="UniProtKB-SubCell"/>
</dbReference>
<dbReference type="GO" id="GO:0003755">
    <property type="term" value="F:peptidyl-prolyl cis-trans isomerase activity"/>
    <property type="evidence" value="ECO:0007669"/>
    <property type="project" value="UniProtKB-UniRule"/>
</dbReference>
<dbReference type="GO" id="GO:0044183">
    <property type="term" value="F:protein folding chaperone"/>
    <property type="evidence" value="ECO:0007669"/>
    <property type="project" value="TreeGrafter"/>
</dbReference>
<dbReference type="GO" id="GO:0043022">
    <property type="term" value="F:ribosome binding"/>
    <property type="evidence" value="ECO:0007669"/>
    <property type="project" value="TreeGrafter"/>
</dbReference>
<dbReference type="GO" id="GO:0051083">
    <property type="term" value="P:'de novo' cotranslational protein folding"/>
    <property type="evidence" value="ECO:0007669"/>
    <property type="project" value="TreeGrafter"/>
</dbReference>
<dbReference type="GO" id="GO:0051301">
    <property type="term" value="P:cell division"/>
    <property type="evidence" value="ECO:0007669"/>
    <property type="project" value="UniProtKB-KW"/>
</dbReference>
<dbReference type="GO" id="GO:0061077">
    <property type="term" value="P:chaperone-mediated protein folding"/>
    <property type="evidence" value="ECO:0007669"/>
    <property type="project" value="TreeGrafter"/>
</dbReference>
<dbReference type="GO" id="GO:0015031">
    <property type="term" value="P:protein transport"/>
    <property type="evidence" value="ECO:0007669"/>
    <property type="project" value="UniProtKB-UniRule"/>
</dbReference>
<dbReference type="GO" id="GO:0043335">
    <property type="term" value="P:protein unfolding"/>
    <property type="evidence" value="ECO:0007669"/>
    <property type="project" value="TreeGrafter"/>
</dbReference>
<dbReference type="FunFam" id="3.10.50.40:FF:000001">
    <property type="entry name" value="Trigger factor"/>
    <property type="match status" value="1"/>
</dbReference>
<dbReference type="Gene3D" id="3.10.50.40">
    <property type="match status" value="1"/>
</dbReference>
<dbReference type="Gene3D" id="3.30.70.1050">
    <property type="entry name" value="Trigger factor ribosome-binding domain"/>
    <property type="match status" value="1"/>
</dbReference>
<dbReference type="Gene3D" id="1.10.3120.10">
    <property type="entry name" value="Trigger factor, C-terminal domain"/>
    <property type="match status" value="1"/>
</dbReference>
<dbReference type="HAMAP" id="MF_00303">
    <property type="entry name" value="Trigger_factor_Tig"/>
    <property type="match status" value="1"/>
</dbReference>
<dbReference type="InterPro" id="IPR046357">
    <property type="entry name" value="PPIase_dom_sf"/>
</dbReference>
<dbReference type="InterPro" id="IPR001179">
    <property type="entry name" value="PPIase_FKBP_dom"/>
</dbReference>
<dbReference type="InterPro" id="IPR005215">
    <property type="entry name" value="Trig_fac"/>
</dbReference>
<dbReference type="InterPro" id="IPR008880">
    <property type="entry name" value="Trigger_fac_C"/>
</dbReference>
<dbReference type="InterPro" id="IPR037041">
    <property type="entry name" value="Trigger_fac_C_sf"/>
</dbReference>
<dbReference type="InterPro" id="IPR008881">
    <property type="entry name" value="Trigger_fac_ribosome-bd_bac"/>
</dbReference>
<dbReference type="InterPro" id="IPR036611">
    <property type="entry name" value="Trigger_fac_ribosome-bd_sf"/>
</dbReference>
<dbReference type="InterPro" id="IPR027304">
    <property type="entry name" value="Trigger_fact/SurA_dom_sf"/>
</dbReference>
<dbReference type="NCBIfam" id="TIGR00115">
    <property type="entry name" value="tig"/>
    <property type="match status" value="1"/>
</dbReference>
<dbReference type="PANTHER" id="PTHR30560">
    <property type="entry name" value="TRIGGER FACTOR CHAPERONE AND PEPTIDYL-PROLYL CIS/TRANS ISOMERASE"/>
    <property type="match status" value="1"/>
</dbReference>
<dbReference type="PANTHER" id="PTHR30560:SF3">
    <property type="entry name" value="TRIGGER FACTOR-LIKE PROTEIN TIG, CHLOROPLASTIC"/>
    <property type="match status" value="1"/>
</dbReference>
<dbReference type="Pfam" id="PF00254">
    <property type="entry name" value="FKBP_C"/>
    <property type="match status" value="1"/>
</dbReference>
<dbReference type="Pfam" id="PF05698">
    <property type="entry name" value="Trigger_C"/>
    <property type="match status" value="1"/>
</dbReference>
<dbReference type="Pfam" id="PF05697">
    <property type="entry name" value="Trigger_N"/>
    <property type="match status" value="1"/>
</dbReference>
<dbReference type="PIRSF" id="PIRSF003095">
    <property type="entry name" value="Trigger_factor"/>
    <property type="match status" value="1"/>
</dbReference>
<dbReference type="SUPFAM" id="SSF54534">
    <property type="entry name" value="FKBP-like"/>
    <property type="match status" value="1"/>
</dbReference>
<dbReference type="SUPFAM" id="SSF109998">
    <property type="entry name" value="Triger factor/SurA peptide-binding domain-like"/>
    <property type="match status" value="1"/>
</dbReference>
<dbReference type="SUPFAM" id="SSF102735">
    <property type="entry name" value="Trigger factor ribosome-binding domain"/>
    <property type="match status" value="1"/>
</dbReference>
<dbReference type="PROSITE" id="PS50059">
    <property type="entry name" value="FKBP_PPIASE"/>
    <property type="match status" value="1"/>
</dbReference>
<protein>
    <recommendedName>
        <fullName evidence="1">Trigger factor</fullName>
        <shortName evidence="1">TF</shortName>
        <ecNumber evidence="1">5.2.1.8</ecNumber>
    </recommendedName>
    <alternativeName>
        <fullName evidence="1">PPIase</fullName>
    </alternativeName>
</protein>
<keyword id="KW-0131">Cell cycle</keyword>
<keyword id="KW-0132">Cell division</keyword>
<keyword id="KW-0143">Chaperone</keyword>
<keyword id="KW-0963">Cytoplasm</keyword>
<keyword id="KW-0413">Isomerase</keyword>
<keyword id="KW-0697">Rotamase</keyword>
<accession>Q0BEF5</accession>
<organism>
    <name type="scientific">Burkholderia ambifaria (strain ATCC BAA-244 / DSM 16087 / CCUG 44356 / LMG 19182 / AMMD)</name>
    <name type="common">Burkholderia cepacia (strain AMMD)</name>
    <dbReference type="NCBI Taxonomy" id="339670"/>
    <lineage>
        <taxon>Bacteria</taxon>
        <taxon>Pseudomonadati</taxon>
        <taxon>Pseudomonadota</taxon>
        <taxon>Betaproteobacteria</taxon>
        <taxon>Burkholderiales</taxon>
        <taxon>Burkholderiaceae</taxon>
        <taxon>Burkholderia</taxon>
        <taxon>Burkholderia cepacia complex</taxon>
    </lineage>
</organism>
<comment type="function">
    <text evidence="1">Involved in protein export. Acts as a chaperone by maintaining the newly synthesized protein in an open conformation. Functions as a peptidyl-prolyl cis-trans isomerase.</text>
</comment>
<comment type="catalytic activity">
    <reaction evidence="1">
        <text>[protein]-peptidylproline (omega=180) = [protein]-peptidylproline (omega=0)</text>
        <dbReference type="Rhea" id="RHEA:16237"/>
        <dbReference type="Rhea" id="RHEA-COMP:10747"/>
        <dbReference type="Rhea" id="RHEA-COMP:10748"/>
        <dbReference type="ChEBI" id="CHEBI:83833"/>
        <dbReference type="ChEBI" id="CHEBI:83834"/>
        <dbReference type="EC" id="5.2.1.8"/>
    </reaction>
</comment>
<comment type="subcellular location">
    <subcellularLocation>
        <location>Cytoplasm</location>
    </subcellularLocation>
    <text evidence="1">About half TF is bound to the ribosome near the polypeptide exit tunnel while the other half is free in the cytoplasm.</text>
</comment>
<comment type="domain">
    <text evidence="1">Consists of 3 domains; the N-terminus binds the ribosome, the middle domain has PPIase activity, while the C-terminus has intrinsic chaperone activity on its own.</text>
</comment>
<comment type="similarity">
    <text evidence="1">Belongs to the FKBP-type PPIase family. Tig subfamily.</text>
</comment>
<sequence length="448" mass="49887">MANVVENLGKLERRVTISLPKDTVQKEIDARIQKLAKNVRMPGFRPGKVPLKMVAQQYSGQVEAEVLSDKIGQEFFTISRAENLRVAGQPSFEPKQEQAEDAYAFDATFEVYPEVKIGDLATAEVERSTTSIGDAEIDRTLDILRKQRVHYHARGEAGEHGDGGADTAAKDGDRVTVDFVGKIDDVAFQGGTAEDFPFVLGEGRMLPEFETAALGLKVGEQRTFDLKFPDDYHGKDVAGKTAQFTVTMKKIEWPHLPEIDAEFAKSLGIEDGDLTKMRAEIKENLEREAKRRTQSIVKNQVMDALLKISELDVPKALIEQDQQRLVEMARQDLAQRGVPNAKDAPIPAEMFAEQAERRVKLGLVLAELVKANGLEAKPEQIRAEVDEFAKSYEDPKEVVRWYYSNQQRLAEMEAFVVESNVVDFVLGKAKVTDKEVSFEALASASSQA</sequence>
<reference key="1">
    <citation type="submission" date="2006-08" db="EMBL/GenBank/DDBJ databases">
        <title>Complete sequence of chromosome 1 of Burkholderia cepacia AMMD.</title>
        <authorList>
            <person name="Copeland A."/>
            <person name="Lucas S."/>
            <person name="Lapidus A."/>
            <person name="Barry K."/>
            <person name="Detter J.C."/>
            <person name="Glavina del Rio T."/>
            <person name="Hammon N."/>
            <person name="Israni S."/>
            <person name="Pitluck S."/>
            <person name="Bruce D."/>
            <person name="Chain P."/>
            <person name="Malfatti S."/>
            <person name="Shin M."/>
            <person name="Vergez L."/>
            <person name="Schmutz J."/>
            <person name="Larimer F."/>
            <person name="Land M."/>
            <person name="Hauser L."/>
            <person name="Kyrpides N."/>
            <person name="Kim E."/>
            <person name="Parke J."/>
            <person name="Coenye T."/>
            <person name="Konstantinidis K."/>
            <person name="Ramette A."/>
            <person name="Tiedje J."/>
            <person name="Richardson P."/>
        </authorList>
    </citation>
    <scope>NUCLEOTIDE SEQUENCE [LARGE SCALE GENOMIC DNA]</scope>
    <source>
        <strain>ATCC BAA-244 / DSM 16087 / CCUG 44356 / LMG 19182 / AMMD</strain>
    </source>
</reference>